<protein>
    <recommendedName>
        <fullName evidence="2">Small ribosomal subunit protein uS12</fullName>
    </recommendedName>
    <alternativeName>
        <fullName evidence="4">30S ribosomal protein S12</fullName>
    </alternativeName>
</protein>
<accession>C0Q9X7</accession>
<gene>
    <name evidence="2" type="primary">rpsL</name>
    <name type="ordered locus">HRM2_36300</name>
</gene>
<keyword id="KW-0488">Methylation</keyword>
<keyword id="KW-1185">Reference proteome</keyword>
<keyword id="KW-0687">Ribonucleoprotein</keyword>
<keyword id="KW-0689">Ribosomal protein</keyword>
<keyword id="KW-0694">RNA-binding</keyword>
<keyword id="KW-0699">rRNA-binding</keyword>
<keyword id="KW-0820">tRNA-binding</keyword>
<proteinExistence type="inferred from homology"/>
<sequence length="123" mass="13598">MPTINQLVRKGRKKAEKKQSTPALKGGPQKRGVCTRVYTSTPKKPNSALRKVARVRLTTGMEVAAYIPGMGHNLQEHSVVLVRGGRVKDLPGVRYHIVRGTLDTLGVEDRKQGRSKYGAKRPK</sequence>
<reference key="1">
    <citation type="journal article" date="2009" name="Environ. Microbiol.">
        <title>Genome sequence of Desulfobacterium autotrophicum HRM2, a marine sulfate reducer oxidizing organic carbon completely to carbon dioxide.</title>
        <authorList>
            <person name="Strittmatter A.W."/>
            <person name="Liesegang H."/>
            <person name="Rabus R."/>
            <person name="Decker I."/>
            <person name="Amann J."/>
            <person name="Andres S."/>
            <person name="Henne A."/>
            <person name="Fricke W.F."/>
            <person name="Martinez-Arias R."/>
            <person name="Bartels D."/>
            <person name="Goesmann A."/>
            <person name="Krause L."/>
            <person name="Puehler A."/>
            <person name="Klenk H.P."/>
            <person name="Richter M."/>
            <person name="Schuler M."/>
            <person name="Gloeckner F.O."/>
            <person name="Meyerdierks A."/>
            <person name="Gottschalk G."/>
            <person name="Amann R."/>
        </authorList>
    </citation>
    <scope>NUCLEOTIDE SEQUENCE [LARGE SCALE GENOMIC DNA]</scope>
    <source>
        <strain>ATCC 43914 / DSM 3382 / VKM B-1955 / HRM2</strain>
    </source>
</reference>
<feature type="chain" id="PRO_1000205910" description="Small ribosomal subunit protein uS12">
    <location>
        <begin position="1"/>
        <end position="123"/>
    </location>
</feature>
<feature type="region of interest" description="Disordered" evidence="3">
    <location>
        <begin position="1"/>
        <end position="47"/>
    </location>
</feature>
<feature type="modified residue" description="3-methylthioaspartic acid" evidence="1">
    <location>
        <position position="89"/>
    </location>
</feature>
<organism>
    <name type="scientific">Desulforapulum autotrophicum (strain ATCC 43914 / DSM 3382 / VKM B-1955 / HRM2)</name>
    <name type="common">Desulfobacterium autotrophicum</name>
    <dbReference type="NCBI Taxonomy" id="177437"/>
    <lineage>
        <taxon>Bacteria</taxon>
        <taxon>Pseudomonadati</taxon>
        <taxon>Thermodesulfobacteriota</taxon>
        <taxon>Desulfobacteria</taxon>
        <taxon>Desulfobacterales</taxon>
        <taxon>Desulfobacteraceae</taxon>
        <taxon>Desulforapulum</taxon>
    </lineage>
</organism>
<name>RS12_DESAH</name>
<dbReference type="EMBL" id="CP001087">
    <property type="protein sequence ID" value="ACN16695.1"/>
    <property type="molecule type" value="Genomic_DNA"/>
</dbReference>
<dbReference type="RefSeq" id="WP_015905445.1">
    <property type="nucleotide sequence ID" value="NC_012108.1"/>
</dbReference>
<dbReference type="SMR" id="C0Q9X7"/>
<dbReference type="STRING" id="177437.HRM2_36300"/>
<dbReference type="KEGG" id="dat:HRM2_36300"/>
<dbReference type="eggNOG" id="COG0048">
    <property type="taxonomic scope" value="Bacteria"/>
</dbReference>
<dbReference type="HOGENOM" id="CLU_104295_1_2_7"/>
<dbReference type="OrthoDB" id="9802366at2"/>
<dbReference type="Proteomes" id="UP000000442">
    <property type="component" value="Chromosome"/>
</dbReference>
<dbReference type="GO" id="GO:0015935">
    <property type="term" value="C:small ribosomal subunit"/>
    <property type="evidence" value="ECO:0007669"/>
    <property type="project" value="InterPro"/>
</dbReference>
<dbReference type="GO" id="GO:0019843">
    <property type="term" value="F:rRNA binding"/>
    <property type="evidence" value="ECO:0007669"/>
    <property type="project" value="UniProtKB-UniRule"/>
</dbReference>
<dbReference type="GO" id="GO:0003735">
    <property type="term" value="F:structural constituent of ribosome"/>
    <property type="evidence" value="ECO:0007669"/>
    <property type="project" value="InterPro"/>
</dbReference>
<dbReference type="GO" id="GO:0000049">
    <property type="term" value="F:tRNA binding"/>
    <property type="evidence" value="ECO:0007669"/>
    <property type="project" value="UniProtKB-UniRule"/>
</dbReference>
<dbReference type="GO" id="GO:0006412">
    <property type="term" value="P:translation"/>
    <property type="evidence" value="ECO:0007669"/>
    <property type="project" value="UniProtKB-UniRule"/>
</dbReference>
<dbReference type="CDD" id="cd03368">
    <property type="entry name" value="Ribosomal_S12"/>
    <property type="match status" value="1"/>
</dbReference>
<dbReference type="FunFam" id="2.40.50.140:FF:000001">
    <property type="entry name" value="30S ribosomal protein S12"/>
    <property type="match status" value="1"/>
</dbReference>
<dbReference type="Gene3D" id="2.40.50.140">
    <property type="entry name" value="Nucleic acid-binding proteins"/>
    <property type="match status" value="1"/>
</dbReference>
<dbReference type="HAMAP" id="MF_00403_B">
    <property type="entry name" value="Ribosomal_uS12_B"/>
    <property type="match status" value="1"/>
</dbReference>
<dbReference type="InterPro" id="IPR012340">
    <property type="entry name" value="NA-bd_OB-fold"/>
</dbReference>
<dbReference type="InterPro" id="IPR006032">
    <property type="entry name" value="Ribosomal_uS12"/>
</dbReference>
<dbReference type="InterPro" id="IPR005679">
    <property type="entry name" value="Ribosomal_uS12_bac"/>
</dbReference>
<dbReference type="NCBIfam" id="TIGR00981">
    <property type="entry name" value="rpsL_bact"/>
    <property type="match status" value="1"/>
</dbReference>
<dbReference type="PANTHER" id="PTHR11652">
    <property type="entry name" value="30S RIBOSOMAL PROTEIN S12 FAMILY MEMBER"/>
    <property type="match status" value="1"/>
</dbReference>
<dbReference type="Pfam" id="PF00164">
    <property type="entry name" value="Ribosom_S12_S23"/>
    <property type="match status" value="1"/>
</dbReference>
<dbReference type="PIRSF" id="PIRSF002133">
    <property type="entry name" value="Ribosomal_S12/S23"/>
    <property type="match status" value="1"/>
</dbReference>
<dbReference type="PRINTS" id="PR01034">
    <property type="entry name" value="RIBOSOMALS12"/>
</dbReference>
<dbReference type="SUPFAM" id="SSF50249">
    <property type="entry name" value="Nucleic acid-binding proteins"/>
    <property type="match status" value="1"/>
</dbReference>
<dbReference type="PROSITE" id="PS00055">
    <property type="entry name" value="RIBOSOMAL_S12"/>
    <property type="match status" value="1"/>
</dbReference>
<evidence type="ECO:0000250" key="1"/>
<evidence type="ECO:0000255" key="2">
    <source>
        <dbReference type="HAMAP-Rule" id="MF_00403"/>
    </source>
</evidence>
<evidence type="ECO:0000256" key="3">
    <source>
        <dbReference type="SAM" id="MobiDB-lite"/>
    </source>
</evidence>
<evidence type="ECO:0000305" key="4"/>
<comment type="function">
    <text evidence="2">With S4 and S5 plays an important role in translational accuracy.</text>
</comment>
<comment type="function">
    <text evidence="2">Interacts with and stabilizes bases of the 16S rRNA that are involved in tRNA selection in the A site and with the mRNA backbone. Located at the interface of the 30S and 50S subunits, it traverses the body of the 30S subunit contacting proteins on the other side and probably holding the rRNA structure together. The combined cluster of proteins S8, S12 and S17 appears to hold together the shoulder and platform of the 30S subunit.</text>
</comment>
<comment type="subunit">
    <text evidence="2">Part of the 30S ribosomal subunit. Contacts proteins S8 and S17. May interact with IF1 in the 30S initiation complex.</text>
</comment>
<comment type="similarity">
    <text evidence="2">Belongs to the universal ribosomal protein uS12 family.</text>
</comment>